<reference key="1">
    <citation type="journal article" date="1984" name="EMBO J.">
        <title>Two different types of intervening sequences in the glucoamylase gene from Aspergillus niger.</title>
        <authorList>
            <person name="Boel E."/>
            <person name="Hansen M.T."/>
            <person name="Hjort I."/>
            <person name="Hoegh I."/>
            <person name="Fiil N.P."/>
        </authorList>
    </citation>
    <scope>NUCLEOTIDE SEQUENCE (ISOFORMS G1 AND G2)</scope>
</reference>
<reference key="2">
    <citation type="journal article" date="1984" name="EMBO J.">
        <title>Glucoamylases G1 and G2 from Aspergillus niger are synthesized from two different but closely related mRNAs.</title>
        <authorList>
            <person name="Boel E."/>
            <person name="Hjort I."/>
            <person name="Svensson B."/>
            <person name="Norris F."/>
            <person name="Norris K.E."/>
            <person name="Fiil N.P."/>
        </authorList>
    </citation>
    <scope>NUCLEOTIDE SEQUENCE (ISOFORMS G1 AND G2)</scope>
</reference>
<reference key="3">
    <citation type="journal article" date="1986" name="Eur. J. Biochem.">
        <title>Characterization of a glucoamylase G2 from Aspergillus niger.</title>
        <authorList>
            <person name="Svensson B."/>
            <person name="Larsen K."/>
            <person name="Gunnarsson A."/>
        </authorList>
    </citation>
    <scope>PROTEIN SEQUENCE OF 25-640</scope>
    <scope>COMPARISON OF FORMS G1 AND G2</scope>
</reference>
<reference key="4">
    <citation type="journal article" date="1983" name="Carlsberg Res. Commun.">
        <title>The complete amino acid sequence of the glycoprotein, glucoamylase G1, from Aspergillus niger.</title>
        <authorList>
            <person name="Svensson B."/>
            <person name="Larsen K."/>
            <person name="Svendsen I."/>
            <person name="Boel E."/>
        </authorList>
    </citation>
    <scope>PROTEIN SEQUENCE OF 25-640 (ISOFORM G1)</scope>
    <scope>GLYCOSYLATION</scope>
</reference>
<reference key="5">
    <citation type="journal article" date="1990" name="Curr. Genet.">
        <title>Regulation of the glaA gene of Aspergillus niger.</title>
        <authorList>
            <person name="Fowler T."/>
            <person name="Berka R.M."/>
            <person name="Ward M."/>
        </authorList>
    </citation>
    <scope>NUCLEOTIDE SEQUENCE OF 1-11</scope>
    <source>
        <strain>ATCC 10864 / NRRL 330 / CBS 122.49 / NBRC 6661 / NRRL 330</strain>
    </source>
</reference>
<reference key="6">
    <citation type="journal article" date="1992" name="Biochem. J.">
        <title>O-glycosylation in Aspergillus glucoamylase. Conformation and role in binding.</title>
        <authorList>
            <person name="Williamson G."/>
            <person name="Belshaw N.J."/>
            <person name="Williamson M.P."/>
        </authorList>
    </citation>
    <scope>CONFORMATION OF O-GLYCOSYLATED REGION</scope>
</reference>
<reference key="7">
    <citation type="journal article" date="1993" name="Biochem. J.">
        <title>Production, purification and characterization of the catalytic domain of glucoamylase from Aspergillus niger.</title>
        <authorList>
            <person name="Stoffer B."/>
            <person name="Frandsen T.P."/>
            <person name="Busk P.K."/>
            <person name="Schneider P."/>
            <person name="Svendsen I."/>
            <person name="Svensson B."/>
        </authorList>
    </citation>
    <scope>CHARACTERIZATION OF CATALYTIC DOMAIN</scope>
</reference>
<reference key="8">
    <citation type="journal article" date="1996" name="J. Mol. Biol.">
        <title>Solution structure of the granular starch binding domain of glucoamylase from Aspergillus niger by nuclear magnetic resonance spectroscopy.</title>
        <authorList>
            <person name="Sorimachi K."/>
            <person name="Jacks A.J."/>
            <person name="le Gal-Coeffet M.-F."/>
            <person name="Williamson G."/>
            <person name="Archer D.B."/>
            <person name="Williamson M.P."/>
        </authorList>
    </citation>
    <scope>STRUCTURE BY NMR OF 533-640</scope>
</reference>
<reference key="9">
    <citation type="journal article" date="1997" name="Structure">
        <title>Solution structure of the granular starch binding domain of Aspergillus niger glucoamylase bound to beta-cyclodextrin.</title>
        <authorList>
            <person name="Sorimachi K."/>
            <person name="le Gal-Coeffet M.-F."/>
            <person name="Williamson G."/>
            <person name="Archer D.B."/>
            <person name="Williamson M.P."/>
        </authorList>
    </citation>
    <scope>STRUCTURE BY NMR OF 533-640</scope>
</reference>
<proteinExistence type="evidence at protein level"/>
<protein>
    <recommendedName>
        <fullName>Glucoamylase</fullName>
        <ecNumber>3.2.1.3</ecNumber>
    </recommendedName>
    <alternativeName>
        <fullName>1,4-alpha-D-glucan glucohydrolase</fullName>
    </alternativeName>
    <alternativeName>
        <fullName>Glucan 1,4-alpha-glucosidase</fullName>
    </alternativeName>
</protein>
<keyword id="KW-0002">3D-structure</keyword>
<keyword id="KW-0025">Alternative splicing</keyword>
<keyword id="KW-0119">Carbohydrate metabolism</keyword>
<keyword id="KW-0165">Cleavage on pair of basic residues</keyword>
<keyword id="KW-0903">Direct protein sequencing</keyword>
<keyword id="KW-1015">Disulfide bond</keyword>
<keyword id="KW-0325">Glycoprotein</keyword>
<keyword id="KW-0326">Glycosidase</keyword>
<keyword id="KW-0378">Hydrolase</keyword>
<keyword id="KW-0624">Polysaccharide degradation</keyword>
<keyword id="KW-0732">Signal</keyword>
<name>AMYG_ASPNG</name>
<organism>
    <name type="scientific">Aspergillus niger</name>
    <dbReference type="NCBI Taxonomy" id="5061"/>
    <lineage>
        <taxon>Eukaryota</taxon>
        <taxon>Fungi</taxon>
        <taxon>Dikarya</taxon>
        <taxon>Ascomycota</taxon>
        <taxon>Pezizomycotina</taxon>
        <taxon>Eurotiomycetes</taxon>
        <taxon>Eurotiomycetidae</taxon>
        <taxon>Eurotiales</taxon>
        <taxon>Aspergillaceae</taxon>
        <taxon>Aspergillus</taxon>
        <taxon>Aspergillus subgen. Circumdati</taxon>
    </lineage>
</organism>
<feature type="signal peptide" evidence="2">
    <location>
        <begin position="1"/>
        <end position="18"/>
    </location>
</feature>
<feature type="propeptide" id="PRO_0000001461" evidence="6">
    <location>
        <begin position="19"/>
        <end position="24"/>
    </location>
</feature>
<feature type="chain" id="PRO_0000001462" description="Glucoamylase">
    <location>
        <begin position="25"/>
        <end position="640"/>
    </location>
</feature>
<feature type="domain" description="CBM20" evidence="3">
    <location>
        <begin position="533"/>
        <end position="640"/>
    </location>
</feature>
<feature type="region of interest" description="Disordered" evidence="5">
    <location>
        <begin position="498"/>
        <end position="533"/>
    </location>
</feature>
<feature type="region of interest" description="Disordered" evidence="5">
    <location>
        <begin position="616"/>
        <end position="640"/>
    </location>
</feature>
<feature type="compositionally biased region" description="Polar residues" evidence="5">
    <location>
        <begin position="628"/>
        <end position="640"/>
    </location>
</feature>
<feature type="active site" description="Proton acceptor" evidence="4">
    <location>
        <position position="200"/>
    </location>
</feature>
<feature type="active site" description="Proton donor" evidence="4">
    <location>
        <position position="203"/>
    </location>
</feature>
<feature type="binding site" evidence="1">
    <location>
        <position position="144"/>
    </location>
    <ligand>
        <name>substrate</name>
    </ligand>
</feature>
<feature type="glycosylation site" description="N-linked (GlcNAc...) asparagine" evidence="1">
    <location>
        <position position="195"/>
    </location>
</feature>
<feature type="glycosylation site" description="N-linked (GlcNAc...) asparagine" evidence="1">
    <location>
        <position position="419"/>
    </location>
</feature>
<feature type="glycosylation site" description="O-linked (Man) serine" evidence="7">
    <location>
        <position position="465"/>
    </location>
</feature>
<feature type="glycosylation site" description="O-linked (Man) serine" evidence="7">
    <location>
        <position position="467"/>
    </location>
</feature>
<feature type="glycosylation site" description="O-linked (Man) serine" evidence="7">
    <location>
        <position position="468"/>
    </location>
</feature>
<feature type="glycosylation site" description="O-linked (Man) threonine" evidence="7">
    <location>
        <position position="476"/>
    </location>
</feature>
<feature type="glycosylation site" description="O-linked (Man) serine" evidence="7">
    <location>
        <position position="477"/>
    </location>
</feature>
<feature type="glycosylation site" description="O-linked (Man) serine" evidence="7">
    <location>
        <position position="483"/>
    </location>
</feature>
<feature type="glycosylation site" description="O-linked (Man) serine" evidence="7">
    <location>
        <position position="484"/>
    </location>
</feature>
<feature type="glycosylation site" description="O-linked (Man) threonine" evidence="7">
    <location>
        <position position="486"/>
    </location>
</feature>
<feature type="glycosylation site" description="O-linked (Man) threonine" evidence="7">
    <location>
        <position position="488"/>
    </location>
</feature>
<feature type="glycosylation site" description="O-linked (Man) serine" evidence="7">
    <location>
        <position position="489"/>
    </location>
</feature>
<feature type="glycosylation site" description="O-linked (Man) serine" evidence="7">
    <location>
        <position position="492"/>
    </location>
</feature>
<feature type="glycosylation site" description="O-linked (Man) threonine" evidence="7">
    <location>
        <position position="496"/>
    </location>
</feature>
<feature type="glycosylation site" description="O-linked (Man) threonine" evidence="7">
    <location>
        <position position="499"/>
    </location>
</feature>
<feature type="glycosylation site" description="O-linked (Man) threonine" evidence="7">
    <location>
        <position position="500"/>
    </location>
</feature>
<feature type="glycosylation site" description="O-linked (Man) threonine" evidence="7">
    <location>
        <position position="501"/>
    </location>
</feature>
<feature type="glycosylation site" description="O-linked (Man) threonine" evidence="7">
    <location>
        <position position="502"/>
    </location>
</feature>
<feature type="glycosylation site" description="O-linked (Man) threonine" evidence="7">
    <location>
        <position position="504"/>
    </location>
</feature>
<feature type="glycosylation site" description="O-linked (Man) threonine" evidence="7">
    <location>
        <position position="506"/>
    </location>
</feature>
<feature type="glycosylation site" description="O-linked (Man) serine" evidence="7">
    <location>
        <position position="508"/>
    </location>
</feature>
<feature type="glycosylation site" description="O-linked (Man) serine" evidence="7">
    <location>
        <position position="510"/>
    </location>
</feature>
<feature type="glycosylation site" description="O-linked (Man) threonine" evidence="7">
    <location>
        <position position="512"/>
    </location>
</feature>
<feature type="glycosylation site" description="O-linked (Man) serine" evidence="7">
    <location>
        <position position="513"/>
    </location>
</feature>
<feature type="glycosylation site" description="O-linked (Man) threonine" evidence="7">
    <location>
        <position position="514"/>
    </location>
</feature>
<feature type="glycosylation site" description="O-linked (Man) serine" evidence="7">
    <location>
        <position position="515"/>
    </location>
</feature>
<feature type="glycosylation site" description="O-linked (Man) threonine" evidence="7">
    <location>
        <position position="517"/>
    </location>
</feature>
<feature type="glycosylation site" description="O-linked (Man) threonine" evidence="7">
    <location>
        <position position="518"/>
    </location>
</feature>
<feature type="glycosylation site" description="O-linked (Man) threonine" evidence="7">
    <location>
        <position position="520"/>
    </location>
</feature>
<feature type="glycosylation site" description="O-linked (Man) serine" evidence="7">
    <location>
        <position position="522"/>
    </location>
</feature>
<feature type="glycosylation site" description="O-linked (Man) threonine" evidence="7">
    <location>
        <position position="524"/>
    </location>
</feature>
<feature type="glycosylation site" description="O-linked (Man) serine" evidence="7">
    <location>
        <position position="525"/>
    </location>
</feature>
<feature type="glycosylation site" description="O-linked (Man) threonine" evidence="7">
    <location>
        <position position="526"/>
    </location>
</feature>
<feature type="glycosylation site" description="O-linked (Man) serine" evidence="7">
    <location>
        <position position="527"/>
    </location>
</feature>
<feature type="glycosylation site" description="O-linked (Man) threonine" evidence="7">
    <location>
        <position position="528"/>
    </location>
</feature>
<feature type="glycosylation site" description="O-linked (Man) serine" evidence="7">
    <location>
        <position position="529"/>
    </location>
</feature>
<feature type="glycosylation site" description="O-linked (Man) serine" evidence="7">
    <location>
        <position position="530"/>
    </location>
</feature>
<feature type="glycosylation site" description="O-linked (Man) threonine" evidence="7">
    <location>
        <position position="531"/>
    </location>
</feature>
<feature type="glycosylation site" description="O-linked (Man) serine" evidence="7">
    <location>
        <position position="532"/>
    </location>
</feature>
<feature type="glycosylation site" description="O-linked (Man) threonine" evidence="7">
    <location>
        <position position="534"/>
    </location>
</feature>
<feature type="glycosylation site" description="O-linked (Man) threonine" evidence="7">
    <location>
        <position position="535"/>
    </location>
</feature>
<feature type="disulfide bond" evidence="1">
    <location>
        <begin position="234"/>
        <end position="237"/>
    </location>
</feature>
<feature type="disulfide bond" evidence="1">
    <location>
        <begin position="246"/>
        <end position="473"/>
    </location>
</feature>
<feature type="disulfide bond" evidence="1">
    <location>
        <begin position="286"/>
        <end position="294"/>
    </location>
</feature>
<feature type="splice variant" id="VSP_012837" description="In isoform G2." evidence="8">
    <original>STSSTSCT</original>
    <variation>TTRSGMSL</variation>
    <location>
        <begin position="527"/>
        <end position="534"/>
    </location>
</feature>
<feature type="splice variant" id="VSP_012838" description="In isoform G2." evidence="8">
    <location>
        <begin position="535"/>
        <end position="640"/>
    </location>
</feature>
<feature type="helix" evidence="11">
    <location>
        <begin position="31"/>
        <end position="44"/>
    </location>
</feature>
<feature type="turn" evidence="11">
    <location>
        <begin position="47"/>
        <end position="49"/>
    </location>
</feature>
<feature type="strand" evidence="11">
    <location>
        <begin position="67"/>
        <end position="71"/>
    </location>
</feature>
<feature type="strand" evidence="11">
    <location>
        <begin position="74"/>
        <end position="76"/>
    </location>
</feature>
<feature type="helix" evidence="11">
    <location>
        <begin position="77"/>
        <end position="92"/>
    </location>
</feature>
<feature type="helix" evidence="11">
    <location>
        <begin position="96"/>
        <end position="98"/>
    </location>
</feature>
<feature type="helix" evidence="11">
    <location>
        <begin position="99"/>
        <end position="112"/>
    </location>
</feature>
<feature type="turn" evidence="11">
    <location>
        <begin position="122"/>
        <end position="124"/>
    </location>
</feature>
<feature type="helix" evidence="11">
    <location>
        <begin position="126"/>
        <end position="129"/>
    </location>
</feature>
<feature type="strand" evidence="11">
    <location>
        <begin position="132"/>
        <end position="134"/>
    </location>
</feature>
<feature type="turn" evidence="11">
    <location>
        <begin position="135"/>
        <end position="137"/>
    </location>
</feature>
<feature type="helix" evidence="11">
    <location>
        <begin position="150"/>
        <end position="168"/>
    </location>
</feature>
<feature type="helix" evidence="11">
    <location>
        <begin position="172"/>
        <end position="177"/>
    </location>
</feature>
<feature type="helix" evidence="11">
    <location>
        <begin position="179"/>
        <end position="193"/>
    </location>
</feature>
<feature type="strand" evidence="11">
    <location>
        <begin position="206"/>
        <end position="209"/>
    </location>
</feature>
<feature type="helix" evidence="11">
    <location>
        <begin position="210"/>
        <end position="229"/>
    </location>
</feature>
<feature type="helix" evidence="11">
    <location>
        <begin position="235"/>
        <end position="248"/>
    </location>
</feature>
<feature type="helix" evidence="11">
    <location>
        <begin position="249"/>
        <end position="251"/>
    </location>
</feature>
<feature type="strand" evidence="11">
    <location>
        <begin position="254"/>
        <end position="257"/>
    </location>
</feature>
<feature type="strand" evidence="13">
    <location>
        <begin position="259"/>
        <end position="262"/>
    </location>
</feature>
<feature type="helix" evidence="11">
    <location>
        <begin position="270"/>
        <end position="278"/>
    </location>
</feature>
<feature type="helix" evidence="11">
    <location>
        <begin position="288"/>
        <end position="290"/>
    </location>
</feature>
<feature type="helix" evidence="11">
    <location>
        <begin position="296"/>
        <end position="307"/>
    </location>
</feature>
<feature type="turn" evidence="11">
    <location>
        <begin position="308"/>
        <end position="312"/>
    </location>
</feature>
<feature type="helix" evidence="11">
    <location>
        <begin position="314"/>
        <end position="316"/>
    </location>
</feature>
<feature type="helix" evidence="11">
    <location>
        <begin position="335"/>
        <end position="337"/>
    </location>
</feature>
<feature type="helix" evidence="11">
    <location>
        <begin position="342"/>
        <end position="362"/>
    </location>
</feature>
<feature type="strand" evidence="11">
    <location>
        <begin position="364"/>
        <end position="367"/>
    </location>
</feature>
<feature type="turn" evidence="11">
    <location>
        <begin position="369"/>
        <end position="371"/>
    </location>
</feature>
<feature type="helix" evidence="11">
    <location>
        <begin position="372"/>
        <end position="378"/>
    </location>
</feature>
<feature type="strand" evidence="11">
    <location>
        <begin position="384"/>
        <end position="388"/>
    </location>
</feature>
<feature type="helix" evidence="11">
    <location>
        <begin position="392"/>
        <end position="415"/>
    </location>
</feature>
<feature type="strand" evidence="11">
    <location>
        <begin position="424"/>
        <end position="426"/>
    </location>
</feature>
<feature type="turn" evidence="11">
    <location>
        <begin position="428"/>
        <end position="430"/>
    </location>
</feature>
<feature type="strand" evidence="11">
    <location>
        <begin position="433"/>
        <end position="438"/>
    </location>
</feature>
<feature type="helix" evidence="11">
    <location>
        <begin position="440"/>
        <end position="453"/>
    </location>
</feature>
<feature type="helix" evidence="11">
    <location>
        <begin position="463"/>
        <end position="465"/>
    </location>
</feature>
<feature type="strand" evidence="12">
    <location>
        <begin position="537"/>
        <end position="546"/>
    </location>
</feature>
<feature type="strand" evidence="12">
    <location>
        <begin position="554"/>
        <end position="561"/>
    </location>
</feature>
<feature type="helix" evidence="12">
    <location>
        <begin position="562"/>
        <end position="564"/>
    </location>
</feature>
<feature type="turn" evidence="12">
    <location>
        <begin position="565"/>
        <end position="567"/>
    </location>
</feature>
<feature type="helix" evidence="12">
    <location>
        <begin position="569"/>
        <end position="571"/>
    </location>
</feature>
<feature type="strand" evidence="10">
    <location>
        <begin position="572"/>
        <end position="574"/>
    </location>
</feature>
<feature type="strand" evidence="9">
    <location>
        <begin position="578"/>
        <end position="583"/>
    </location>
</feature>
<feature type="strand" evidence="12">
    <location>
        <begin position="586"/>
        <end position="594"/>
    </location>
</feature>
<feature type="strand" evidence="9">
    <location>
        <begin position="595"/>
        <end position="597"/>
    </location>
</feature>
<feature type="strand" evidence="12">
    <location>
        <begin position="598"/>
        <end position="606"/>
    </location>
</feature>
<feature type="strand" evidence="9">
    <location>
        <begin position="608"/>
        <end position="610"/>
    </location>
</feature>
<feature type="strand" evidence="12">
    <location>
        <begin position="612"/>
        <end position="614"/>
    </location>
</feature>
<feature type="strand" evidence="12">
    <location>
        <begin position="620"/>
        <end position="623"/>
    </location>
</feature>
<feature type="strand" evidence="9">
    <location>
        <begin position="626"/>
        <end position="629"/>
    </location>
</feature>
<feature type="strand" evidence="12">
    <location>
        <begin position="632"/>
        <end position="638"/>
    </location>
</feature>
<evidence type="ECO:0000250" key="1"/>
<evidence type="ECO:0000255" key="2"/>
<evidence type="ECO:0000255" key="3">
    <source>
        <dbReference type="PROSITE-ProRule" id="PRU00594"/>
    </source>
</evidence>
<evidence type="ECO:0000255" key="4">
    <source>
        <dbReference type="PROSITE-ProRule" id="PRU10051"/>
    </source>
</evidence>
<evidence type="ECO:0000256" key="5">
    <source>
        <dbReference type="SAM" id="MobiDB-lite"/>
    </source>
</evidence>
<evidence type="ECO:0000269" key="6">
    <source>
    </source>
</evidence>
<evidence type="ECO:0000269" key="7">
    <source ref="4"/>
</evidence>
<evidence type="ECO:0000305" key="8"/>
<evidence type="ECO:0007829" key="9">
    <source>
        <dbReference type="PDB" id="1AC0"/>
    </source>
</evidence>
<evidence type="ECO:0007829" key="10">
    <source>
        <dbReference type="PDB" id="1KUL"/>
    </source>
</evidence>
<evidence type="ECO:0007829" key="11">
    <source>
        <dbReference type="PDB" id="3EQA"/>
    </source>
</evidence>
<evidence type="ECO:0007829" key="12">
    <source>
        <dbReference type="PDB" id="5GHL"/>
    </source>
</evidence>
<evidence type="ECO:0007829" key="13">
    <source>
        <dbReference type="PDB" id="6FRV"/>
    </source>
</evidence>
<accession>P69328</accession>
<accession>P04064</accession>
<accession>Q92201</accession>
<accession>Q99179</accession>
<dbReference type="EC" id="3.2.1.3"/>
<dbReference type="EMBL" id="X00548">
    <property type="protein sequence ID" value="CAA25219.1"/>
    <property type="molecule type" value="mRNA"/>
</dbReference>
<dbReference type="EMBL" id="X00712">
    <property type="protein sequence ID" value="CAA25303.1"/>
    <property type="molecule type" value="Genomic_DNA"/>
</dbReference>
<dbReference type="EMBL" id="X00712">
    <property type="protein sequence ID" value="CAA25304.1"/>
    <property type="molecule type" value="Genomic_DNA"/>
</dbReference>
<dbReference type="EMBL" id="X56442">
    <property type="protein sequence ID" value="CAA39825.1"/>
    <property type="molecule type" value="Genomic_DNA"/>
</dbReference>
<dbReference type="PIR" id="A90986">
    <property type="entry name" value="ALASGR"/>
</dbReference>
<dbReference type="RefSeq" id="XP_001390530.1">
    <molecule id="P69328-1"/>
    <property type="nucleotide sequence ID" value="XM_001390493.2"/>
</dbReference>
<dbReference type="PDB" id="1AC0">
    <property type="method" value="NMR"/>
    <property type="chains" value="A=533-640"/>
</dbReference>
<dbReference type="PDB" id="1ACZ">
    <property type="method" value="NMR"/>
    <property type="chains" value="A=533-640"/>
</dbReference>
<dbReference type="PDB" id="1KUL">
    <property type="method" value="NMR"/>
    <property type="chains" value="A=533-640"/>
</dbReference>
<dbReference type="PDB" id="1KUM">
    <property type="method" value="NMR"/>
    <property type="chains" value="A=533-640"/>
</dbReference>
<dbReference type="PDB" id="3EQA">
    <property type="method" value="X-ray"/>
    <property type="resolution" value="1.90 A"/>
    <property type="chains" value="A=25-494"/>
</dbReference>
<dbReference type="PDB" id="5GHL">
    <property type="method" value="X-ray"/>
    <property type="resolution" value="2.00 A"/>
    <property type="chains" value="A/B/C/D=533-640"/>
</dbReference>
<dbReference type="PDB" id="6FRV">
    <property type="method" value="X-ray"/>
    <property type="resolution" value="2.30 A"/>
    <property type="chains" value="A=25-640"/>
</dbReference>
<dbReference type="PDBsum" id="1AC0"/>
<dbReference type="PDBsum" id="1ACZ"/>
<dbReference type="PDBsum" id="1KUL"/>
<dbReference type="PDBsum" id="1KUM"/>
<dbReference type="PDBsum" id="3EQA"/>
<dbReference type="PDBsum" id="5GHL"/>
<dbReference type="PDBsum" id="6FRV"/>
<dbReference type="BMRB" id="P69328"/>
<dbReference type="SMR" id="P69328"/>
<dbReference type="BindingDB" id="P69328"/>
<dbReference type="ChEMBL" id="CHEMBL3745"/>
<dbReference type="Allergome" id="914">
    <property type="allergen name" value="Asp n Glucoamylase"/>
</dbReference>
<dbReference type="CAZy" id="CBM20">
    <property type="family name" value="Carbohydrate-Binding Module Family 20"/>
</dbReference>
<dbReference type="CAZy" id="GH15">
    <property type="family name" value="Glycoside Hydrolase Family 15"/>
</dbReference>
<dbReference type="GlyConnect" id="175">
    <property type="glycosylation" value="4 O-Linked glycans"/>
</dbReference>
<dbReference type="GlyCosmos" id="P69328">
    <property type="glycosylation" value="41 sites, 7 glycans"/>
</dbReference>
<dbReference type="PaxDb" id="5061-CADANGAP00003574"/>
<dbReference type="EnsemblFungi" id="CAK38411">
    <molecule id="P69328-1"/>
    <property type="protein sequence ID" value="CAK38411"/>
    <property type="gene ID" value="An03g06550"/>
</dbReference>
<dbReference type="GeneID" id="4980642"/>
<dbReference type="KEGG" id="ang:An03g06550"/>
<dbReference type="VEuPathDB" id="FungiDB:An03g06550"/>
<dbReference type="VEuPathDB" id="FungiDB:ASPNIDRAFT2_1166799"/>
<dbReference type="VEuPathDB" id="FungiDB:ATCC64974_75950"/>
<dbReference type="VEuPathDB" id="FungiDB:M747DRAFT_339326"/>
<dbReference type="eggNOG" id="ENOG502QPM2">
    <property type="taxonomic scope" value="Eukaryota"/>
</dbReference>
<dbReference type="OrthoDB" id="6123450at2759"/>
<dbReference type="BRENDA" id="3.2.1.3">
    <property type="organism ID" value="518"/>
</dbReference>
<dbReference type="EvolutionaryTrace" id="P69328"/>
<dbReference type="GO" id="GO:0005783">
    <property type="term" value="C:endoplasmic reticulum"/>
    <property type="evidence" value="ECO:0000314"/>
    <property type="project" value="AspGD"/>
</dbReference>
<dbReference type="GO" id="GO:0000324">
    <property type="term" value="C:fungal-type vacuole"/>
    <property type="evidence" value="ECO:0007669"/>
    <property type="project" value="TreeGrafter"/>
</dbReference>
<dbReference type="GO" id="GO:0004339">
    <property type="term" value="F:glucan 1,4-alpha-glucosidase activity"/>
    <property type="evidence" value="ECO:0000315"/>
    <property type="project" value="AspGD"/>
</dbReference>
<dbReference type="GO" id="GO:2001070">
    <property type="term" value="F:starch binding"/>
    <property type="evidence" value="ECO:0007669"/>
    <property type="project" value="InterPro"/>
</dbReference>
<dbReference type="GO" id="GO:0000272">
    <property type="term" value="P:polysaccharide catabolic process"/>
    <property type="evidence" value="ECO:0007669"/>
    <property type="project" value="UniProtKB-KW"/>
</dbReference>
<dbReference type="GO" id="GO:0005976">
    <property type="term" value="P:polysaccharide metabolic process"/>
    <property type="evidence" value="ECO:0000315"/>
    <property type="project" value="AspGD"/>
</dbReference>
<dbReference type="CDD" id="cd05811">
    <property type="entry name" value="CBM20_glucoamylase"/>
    <property type="match status" value="1"/>
</dbReference>
<dbReference type="FunFam" id="1.50.10.10:FF:000018">
    <property type="entry name" value="Glucoamylase"/>
    <property type="match status" value="1"/>
</dbReference>
<dbReference type="FunFam" id="2.60.40.10:FF:000552">
    <property type="entry name" value="Related to glucoamylase"/>
    <property type="match status" value="1"/>
</dbReference>
<dbReference type="Gene3D" id="1.50.10.10">
    <property type="match status" value="1"/>
</dbReference>
<dbReference type="Gene3D" id="2.60.40.10">
    <property type="entry name" value="Immunoglobulins"/>
    <property type="match status" value="1"/>
</dbReference>
<dbReference type="InterPro" id="IPR008928">
    <property type="entry name" value="6-hairpin_glycosidase_sf"/>
</dbReference>
<dbReference type="InterPro" id="IPR012341">
    <property type="entry name" value="6hp_glycosidase-like_sf"/>
</dbReference>
<dbReference type="InterPro" id="IPR013784">
    <property type="entry name" value="Carb-bd-like_fold"/>
</dbReference>
<dbReference type="InterPro" id="IPR002044">
    <property type="entry name" value="CBM20"/>
</dbReference>
<dbReference type="InterPro" id="IPR034836">
    <property type="entry name" value="CBM20_glucoamylase"/>
</dbReference>
<dbReference type="InterPro" id="IPR011613">
    <property type="entry name" value="GH15-like"/>
</dbReference>
<dbReference type="InterPro" id="IPR000165">
    <property type="entry name" value="Glucoamylase"/>
</dbReference>
<dbReference type="InterPro" id="IPR046966">
    <property type="entry name" value="Glucoamylase_active_site"/>
</dbReference>
<dbReference type="InterPro" id="IPR008291">
    <property type="entry name" value="Glucoamylase_SBD"/>
</dbReference>
<dbReference type="InterPro" id="IPR013783">
    <property type="entry name" value="Ig-like_fold"/>
</dbReference>
<dbReference type="PANTHER" id="PTHR31616:SF12">
    <property type="entry name" value="GLUCOAMYLASE"/>
    <property type="match status" value="1"/>
</dbReference>
<dbReference type="PANTHER" id="PTHR31616">
    <property type="entry name" value="TREHALASE"/>
    <property type="match status" value="1"/>
</dbReference>
<dbReference type="Pfam" id="PF00686">
    <property type="entry name" value="CBM_20"/>
    <property type="match status" value="1"/>
</dbReference>
<dbReference type="Pfam" id="PF00723">
    <property type="entry name" value="Glyco_hydro_15"/>
    <property type="match status" value="1"/>
</dbReference>
<dbReference type="PIRSF" id="PIRSF001031">
    <property type="entry name" value="Glu-a-glcsd_SBD"/>
    <property type="match status" value="1"/>
</dbReference>
<dbReference type="PRINTS" id="PR00736">
    <property type="entry name" value="GLHYDRLASE15"/>
</dbReference>
<dbReference type="SMART" id="SM01065">
    <property type="entry name" value="CBM_2"/>
    <property type="match status" value="1"/>
</dbReference>
<dbReference type="SUPFAM" id="SSF48208">
    <property type="entry name" value="Six-hairpin glycosidases"/>
    <property type="match status" value="1"/>
</dbReference>
<dbReference type="SUPFAM" id="SSF49452">
    <property type="entry name" value="Starch-binding domain-like"/>
    <property type="match status" value="1"/>
</dbReference>
<dbReference type="PROSITE" id="PS51166">
    <property type="entry name" value="CBM20"/>
    <property type="match status" value="1"/>
</dbReference>
<dbReference type="PROSITE" id="PS00820">
    <property type="entry name" value="GLUCOAMYLASE"/>
    <property type="match status" value="1"/>
</dbReference>
<comment type="catalytic activity">
    <reaction>
        <text>Hydrolysis of terminal (1-&gt;4)-linked alpha-D-glucose residues successively from non-reducing ends of the chains with release of beta-D-glucose.</text>
        <dbReference type="EC" id="3.2.1.3"/>
    </reaction>
</comment>
<comment type="alternative products">
    <event type="alternative splicing"/>
    <isoform>
        <id>P69328-1</id>
        <name>G1</name>
        <sequence type="displayed"/>
    </isoform>
    <isoform>
        <id>P69328-2</id>
        <name>G2</name>
        <sequence type="described" ref="VSP_012837 VSP_012838"/>
    </isoform>
</comment>
<comment type="similarity">
    <text evidence="8">Belongs to the glycosyl hydrolase 15 family.</text>
</comment>
<sequence length="640" mass="68309">MSFRSLLALSGLVCTGLANVISKRATLDSWLSNEATVARTAILNNIGADGAWVSGADSGIVVASPSTDNPDYFYTWTRDSGLVLKTLVDLFRNGDTSLLSTIENYISAQAIVQGISNPSGDLSSGAGLGEPKFNVDETAYTGSWGRPQRDGPALRATAMIGFGQWLLDNGYTSTATDIVWPLVRNDLSYVAQYWNQTGYDLWEEVNGSSFFTIAVQHRALVEGSAFATAVGSSCSWCDSQAPEILCYLQSFWTGSFILANFDSSRSGKDANTLLGSIHTFDPEAACDDSTFQPCSPRALANHKEVVDSFRSIYTLNDGLSDSEAVAVGRYPEDTYYNGNPWFLCTLAAAEQLYDALYQWDKQGSLEVTDVSLDFFKALYSDAATGTYSSSSSTYSSIVDAVKTFADGFVSIVETHAASNGSMSEQYDKSDGEQLSARDLTWSYAALLTANNRRNSVVPASWGETSASSVPGTCAATSAIGTYSSVTVTSWPSIVATGGTTTTATPTGSGSVTSTSKTTATASKTSTSTSSTSCTTPTAVAVTFDLTATTTYGENIYLVGSISQLGDWETSDGIALSADKYTSSDPLWYVTVTLPAGESFEYKFIRIESDDSVEWESDPNREYTVPQACGTSTATVTDTWR</sequence>
<gene>
    <name type="primary">GLAA</name>
</gene>